<protein>
    <recommendedName>
        <fullName evidence="4">tRNA (34-2'-O)-methyltransferase regulator WDR6</fullName>
    </recommendedName>
    <alternativeName>
        <fullName>WD repeat-containing protein 6</fullName>
    </alternativeName>
</protein>
<accession>Q5XFW6</accession>
<gene>
    <name type="primary">Wdr6</name>
</gene>
<sequence length="1125" mass="121937">MDAFGDYVWPRATSELILLPVTGLECVGDRLLAGEGPDLLVYNLDFGGHLRMVKRVQNLLGHYLIHGFRVQPEPKGDLDSEAMIAVFGSKGLRVVKISWGQSHLRELWRSGLWNMSDWIWDARWLEGNVALALGHNSVVLYDPVIGCMLQDVPCTDRCTLSSACLIGDTWKELTIVAGAVSNELLVWYPATALPDNKPVAPDRRVSGHVGVIFSMSYLESKGLLATASEDRSVRIWKVGDLRVPGGRVQNIGHCFGHSARVWQVKLLENYLISAGEDCVCLVWSHEGEILQAFRGHQGRGIRAIAAHERQTWVITGGDDSGIRLWHLVGRGYPGLGVSSLSFKSPSRPGALKAVTLAGSWRVLAVTDVGGLYLYDLEVKCWEQLLEDNRFQSYCLLEAAPGPEGFGLCALANGEGLVKVVPINTPTAAVDQNLFQGKVHSLSWALRGYEELLLLASGPGGVVACLEISAAPTGKAIFVKERCRYLLPPSKQRWHTCSAFLPPGDFLVCGDRRGSVLLFPARPCLFKKPGVGPKAITAAEAPQAGSSSGGSESVVTGLGPVSSLHSLHGKQGVTSVTCHGGYVYSTGRDGSYYQLFVHGGRLQPVLRQKACRGMNWIAGLRMAPDGSMVVLGFHANEFVVWSPRSHEKLHIVNCGGGHRSWAFSDTEAAMAFAYLKDGDVMLYRALGGCIRPNVILREGLHGREITCVKRVGTVTLGPEFEVPNLEHPDSLEPGSEGPGLIDIVITGSEDTTVCVLALPTTTGAAHALTAVCNHISSVRALAVWGVGTPGGPQDSHPGLTAQVVSAGGRAEMHCFSLMITPDASTPSRLACHIMHLSSHRLDEYWDRQRNRHRMIKVDPETRYMSLAICELDSDRPGLGPGPLVAAACSDGAVRLFLLQDSGRILHLLAETFHHKRCVLKVHSFTHEAPNQRRRLILCSAATDGSIAFWDLTTAMDRGSTTLEPPAHPGLPYQMGTPCLTVQAHSCGVNSLHTLPTPEGHHLVASGSEDGSLHVFTLAVKMPELEEADGEAELVPQLCVLDEYSVPCAHAAHVTGIKILSPKLMVSASIDQRLTFWRLGNGEPTFMNSTVYHVPDVADMDCWPVNPEFGHRCALAGQGLEVYNWYD</sequence>
<feature type="chain" id="PRO_0000393462" description="tRNA (34-2'-O)-methyltransferase regulator WDR6">
    <location>
        <begin position="1"/>
        <end position="1125"/>
    </location>
</feature>
<feature type="repeat" description="WD 1">
    <location>
        <begin position="89"/>
        <end position="130"/>
    </location>
</feature>
<feature type="repeat" description="WD 2">
    <location>
        <begin position="155"/>
        <end position="197"/>
    </location>
</feature>
<feature type="repeat" description="WD 3">
    <location>
        <begin position="207"/>
        <end position="246"/>
    </location>
</feature>
<feature type="repeat" description="WD 4">
    <location>
        <begin position="256"/>
        <end position="294"/>
    </location>
</feature>
<feature type="repeat" description="WD 5">
    <location>
        <begin position="295"/>
        <end position="335"/>
    </location>
</feature>
<feature type="repeat" description="WD 6">
    <location>
        <begin position="346"/>
        <end position="384"/>
    </location>
</feature>
<feature type="repeat" description="WD 7">
    <location>
        <begin position="433"/>
        <end position="475"/>
    </location>
</feature>
<feature type="repeat" description="WD 8">
    <location>
        <begin position="489"/>
        <end position="528"/>
    </location>
</feature>
<feature type="repeat" description="WD 9">
    <location>
        <begin position="567"/>
        <end position="605"/>
    </location>
</feature>
<feature type="repeat" description="WD 10">
    <location>
        <begin position="611"/>
        <end position="650"/>
    </location>
</feature>
<feature type="repeat" description="WD 11">
    <location>
        <begin position="652"/>
        <end position="692"/>
    </location>
</feature>
<feature type="repeat" description="WD 12">
    <location>
        <begin position="725"/>
        <end position="765"/>
    </location>
</feature>
<feature type="repeat" description="WD 13">
    <location>
        <begin position="767"/>
        <end position="798"/>
    </location>
</feature>
<feature type="repeat" description="WD 14">
    <location>
        <begin position="860"/>
        <end position="905"/>
    </location>
</feature>
<feature type="repeat" description="WD 15">
    <location>
        <begin position="912"/>
        <end position="958"/>
    </location>
</feature>
<feature type="repeat" description="WD 16">
    <location>
        <begin position="982"/>
        <end position="1024"/>
    </location>
</feature>
<feature type="repeat" description="WD 17">
    <location>
        <begin position="1047"/>
        <end position="1085"/>
    </location>
</feature>
<feature type="modified residue" description="N-acetylmethionine" evidence="1">
    <location>
        <position position="1"/>
    </location>
</feature>
<feature type="splice variant" id="VSP_038996" description="In isoform 2." evidence="3">
    <location>
        <begin position="1"/>
        <end position="972"/>
    </location>
</feature>
<dbReference type="EMBL" id="CH473954">
    <property type="protein sequence ID" value="EDL77156.1"/>
    <property type="molecule type" value="Genomic_DNA"/>
</dbReference>
<dbReference type="EMBL" id="BC084708">
    <property type="protein sequence ID" value="AAH84708.1"/>
    <property type="molecule type" value="mRNA"/>
</dbReference>
<dbReference type="RefSeq" id="NP_001006989.2">
    <molecule id="Q5XFW6-1"/>
    <property type="nucleotide sequence ID" value="NM_001006988.2"/>
</dbReference>
<dbReference type="FunCoup" id="Q5XFW6">
    <property type="interactions" value="2214"/>
</dbReference>
<dbReference type="STRING" id="10116.ENSRNOP00000027411"/>
<dbReference type="GlyGen" id="Q5XFW6">
    <property type="glycosylation" value="1 site"/>
</dbReference>
<dbReference type="iPTMnet" id="Q5XFW6"/>
<dbReference type="PhosphoSitePlus" id="Q5XFW6"/>
<dbReference type="jPOST" id="Q5XFW6"/>
<dbReference type="PaxDb" id="10116-ENSRNOP00000027411"/>
<dbReference type="Ensembl" id="ENSRNOT00000027411.8">
    <molecule id="Q5XFW6-1"/>
    <property type="protein sequence ID" value="ENSRNOP00000027411.5"/>
    <property type="gene ID" value="ENSRNOG00000020185.8"/>
</dbReference>
<dbReference type="GeneID" id="301007"/>
<dbReference type="KEGG" id="rno:301007"/>
<dbReference type="AGR" id="RGD:1307649"/>
<dbReference type="CTD" id="11180"/>
<dbReference type="RGD" id="1307649">
    <property type="gene designation" value="Wdr6"/>
</dbReference>
<dbReference type="eggNOG" id="KOG0974">
    <property type="taxonomic scope" value="Eukaryota"/>
</dbReference>
<dbReference type="GeneTree" id="ENSGT00420000029923"/>
<dbReference type="HOGENOM" id="CLU_002615_0_0_1"/>
<dbReference type="InParanoid" id="Q5XFW6"/>
<dbReference type="PhylomeDB" id="Q5XFW6"/>
<dbReference type="TreeFam" id="TF313984"/>
<dbReference type="Reactome" id="R-RNO-9013420">
    <property type="pathway name" value="RHOU GTPase cycle"/>
</dbReference>
<dbReference type="Reactome" id="R-RNO-9013424">
    <property type="pathway name" value="RHOV GTPase cycle"/>
</dbReference>
<dbReference type="Reactome" id="R-RNO-9696264">
    <property type="pathway name" value="RND3 GTPase cycle"/>
</dbReference>
<dbReference type="Reactome" id="R-RNO-9696270">
    <property type="pathway name" value="RND2 GTPase cycle"/>
</dbReference>
<dbReference type="Reactome" id="R-RNO-9696273">
    <property type="pathway name" value="RND1 GTPase cycle"/>
</dbReference>
<dbReference type="PRO" id="PR:Q5XFW6"/>
<dbReference type="Proteomes" id="UP000002494">
    <property type="component" value="Chromosome 8"/>
</dbReference>
<dbReference type="Proteomes" id="UP000234681">
    <property type="component" value="Chromosome 8"/>
</dbReference>
<dbReference type="Bgee" id="ENSRNOG00000020185">
    <property type="expression patterns" value="Expressed in frontal cortex and 19 other cell types or tissues"/>
</dbReference>
<dbReference type="GO" id="GO:0008180">
    <property type="term" value="C:COP9 signalosome"/>
    <property type="evidence" value="ECO:0000266"/>
    <property type="project" value="RGD"/>
</dbReference>
<dbReference type="GO" id="GO:0005737">
    <property type="term" value="C:cytoplasm"/>
    <property type="evidence" value="ECO:0000266"/>
    <property type="project" value="RGD"/>
</dbReference>
<dbReference type="GO" id="GO:0032991">
    <property type="term" value="C:protein-containing complex"/>
    <property type="evidence" value="ECO:0000314"/>
    <property type="project" value="RGD"/>
</dbReference>
<dbReference type="GO" id="GO:0030234">
    <property type="term" value="F:enzyme regulator activity"/>
    <property type="evidence" value="ECO:0000250"/>
    <property type="project" value="UniProtKB"/>
</dbReference>
<dbReference type="GO" id="GO:0043560">
    <property type="term" value="F:insulin receptor substrate binding"/>
    <property type="evidence" value="ECO:0000353"/>
    <property type="project" value="RGD"/>
</dbReference>
<dbReference type="GO" id="GO:0000049">
    <property type="term" value="F:tRNA binding"/>
    <property type="evidence" value="ECO:0000250"/>
    <property type="project" value="UniProtKB"/>
</dbReference>
<dbReference type="GO" id="GO:0070314">
    <property type="term" value="P:G1 to G0 transition"/>
    <property type="evidence" value="ECO:0000266"/>
    <property type="project" value="RGD"/>
</dbReference>
<dbReference type="GO" id="GO:0008286">
    <property type="term" value="P:insulin receptor signaling pathway"/>
    <property type="evidence" value="ECO:0000303"/>
    <property type="project" value="RGD"/>
</dbReference>
<dbReference type="GO" id="GO:0048009">
    <property type="term" value="P:insulin-like growth factor receptor signaling pathway"/>
    <property type="evidence" value="ECO:0000303"/>
    <property type="project" value="RGD"/>
</dbReference>
<dbReference type="GO" id="GO:0010507">
    <property type="term" value="P:negative regulation of autophagy"/>
    <property type="evidence" value="ECO:0000266"/>
    <property type="project" value="RGD"/>
</dbReference>
<dbReference type="GO" id="GO:0008285">
    <property type="term" value="P:negative regulation of cell population proliferation"/>
    <property type="evidence" value="ECO:0000266"/>
    <property type="project" value="RGD"/>
</dbReference>
<dbReference type="GO" id="GO:0030488">
    <property type="term" value="P:tRNA methylation"/>
    <property type="evidence" value="ECO:0000318"/>
    <property type="project" value="GO_Central"/>
</dbReference>
<dbReference type="GO" id="GO:0002130">
    <property type="term" value="P:wobble position ribose methylation"/>
    <property type="evidence" value="ECO:0000250"/>
    <property type="project" value="UniProtKB"/>
</dbReference>
<dbReference type="FunFam" id="2.130.10.10:FF:000719">
    <property type="entry name" value="WD repeat-containing protein 6"/>
    <property type="match status" value="1"/>
</dbReference>
<dbReference type="FunFam" id="2.130.10.10:FF:000759">
    <property type="entry name" value="WD repeat-containing protein 6"/>
    <property type="match status" value="1"/>
</dbReference>
<dbReference type="FunFam" id="2.130.10.10:FF:000806">
    <property type="entry name" value="WD repeat-containing protein 6"/>
    <property type="match status" value="1"/>
</dbReference>
<dbReference type="FunFam" id="2.130.10.10:FF:000901">
    <property type="entry name" value="WD repeat-containing protein 6"/>
    <property type="match status" value="1"/>
</dbReference>
<dbReference type="Gene3D" id="2.130.10.10">
    <property type="entry name" value="YVTN repeat-like/Quinoprotein amine dehydrogenase"/>
    <property type="match status" value="3"/>
</dbReference>
<dbReference type="InterPro" id="IPR011047">
    <property type="entry name" value="Quinoprotein_ADH-like_sf"/>
</dbReference>
<dbReference type="InterPro" id="IPR051973">
    <property type="entry name" value="tRNA_Anticodon_Mtase-Reg"/>
</dbReference>
<dbReference type="InterPro" id="IPR015943">
    <property type="entry name" value="WD40/YVTN_repeat-like_dom_sf"/>
</dbReference>
<dbReference type="InterPro" id="IPR036322">
    <property type="entry name" value="WD40_repeat_dom_sf"/>
</dbReference>
<dbReference type="InterPro" id="IPR001680">
    <property type="entry name" value="WD40_rpt"/>
</dbReference>
<dbReference type="PANTHER" id="PTHR14344">
    <property type="entry name" value="WD REPEAT PROTEIN"/>
    <property type="match status" value="1"/>
</dbReference>
<dbReference type="PANTHER" id="PTHR14344:SF3">
    <property type="entry name" value="WD REPEAT-CONTAINING PROTEIN 6"/>
    <property type="match status" value="1"/>
</dbReference>
<dbReference type="Pfam" id="PF00400">
    <property type="entry name" value="WD40"/>
    <property type="match status" value="3"/>
</dbReference>
<dbReference type="SMART" id="SM00320">
    <property type="entry name" value="WD40"/>
    <property type="match status" value="9"/>
</dbReference>
<dbReference type="SUPFAM" id="SSF50998">
    <property type="entry name" value="Quinoprotein alcohol dehydrogenase-like"/>
    <property type="match status" value="1"/>
</dbReference>
<dbReference type="SUPFAM" id="SSF50978">
    <property type="entry name" value="WD40 repeat-like"/>
    <property type="match status" value="2"/>
</dbReference>
<dbReference type="PROSITE" id="PS00678">
    <property type="entry name" value="WD_REPEATS_1"/>
    <property type="match status" value="1"/>
</dbReference>
<dbReference type="PROSITE" id="PS50082">
    <property type="entry name" value="WD_REPEATS_2"/>
    <property type="match status" value="1"/>
</dbReference>
<dbReference type="PROSITE" id="PS50294">
    <property type="entry name" value="WD_REPEATS_REGION"/>
    <property type="match status" value="1"/>
</dbReference>
<proteinExistence type="evidence at protein level"/>
<evidence type="ECO:0000250" key="1">
    <source>
        <dbReference type="UniProtKB" id="Q9NNW5"/>
    </source>
</evidence>
<evidence type="ECO:0000269" key="2">
    <source>
    </source>
</evidence>
<evidence type="ECO:0000303" key="3">
    <source>
    </source>
</evidence>
<evidence type="ECO:0000305" key="4"/>
<comment type="function">
    <text evidence="1">Together with methyltransferase FTSJ1, methylates the 2'-O-ribose of nucleotides at position 34 of the tRNA anticodon loop of substrate tRNAs (By similarity). Required for the correct positioning of the substrate tRNA for methylation (By similarity). Required to suppress amino acid starvation-induced autophagy (By similarity). Enhances the STK11/LKB1-induced cell growth suppression activity (By similarity).</text>
</comment>
<comment type="subunit">
    <text evidence="1 2">Interacts with FTSJ1; the interaction is direct, and required for 2'-O-methylation of position 34 in substrate tRNAs (By similarity). Interacts with IRS4 (PubMed:17720279). Interacts with STK11/LKB1 (By similarity).</text>
</comment>
<comment type="subcellular location">
    <subcellularLocation>
        <location evidence="1">Cytoplasm</location>
    </subcellularLocation>
    <text evidence="1">Colocalizes in the cytoplasm with STK11/LKB1.</text>
</comment>
<comment type="alternative products">
    <event type="alternative splicing"/>
    <isoform>
        <id>Q5XFW6-1</id>
        <name>1</name>
        <sequence type="displayed"/>
    </isoform>
    <isoform>
        <id>Q5XFW6-2</id>
        <name>2</name>
        <sequence type="described" ref="VSP_038996"/>
    </isoform>
</comment>
<comment type="tissue specificity">
    <text evidence="2">Expressed in hypothalamus, hippocampus, cerebrum cortex and cerebellum.</text>
</comment>
<comment type="induction">
    <text evidence="2">Down-regulated by caloric restriction. Up-regulated by insulin and IGF1.</text>
</comment>
<comment type="similarity">
    <text evidence="4">Belongs to the WD repeat WDR6 family.</text>
</comment>
<organism>
    <name type="scientific">Rattus norvegicus</name>
    <name type="common">Rat</name>
    <dbReference type="NCBI Taxonomy" id="10116"/>
    <lineage>
        <taxon>Eukaryota</taxon>
        <taxon>Metazoa</taxon>
        <taxon>Chordata</taxon>
        <taxon>Craniata</taxon>
        <taxon>Vertebrata</taxon>
        <taxon>Euteleostomi</taxon>
        <taxon>Mammalia</taxon>
        <taxon>Eutheria</taxon>
        <taxon>Euarchontoglires</taxon>
        <taxon>Glires</taxon>
        <taxon>Rodentia</taxon>
        <taxon>Myomorpha</taxon>
        <taxon>Muroidea</taxon>
        <taxon>Muridae</taxon>
        <taxon>Murinae</taxon>
        <taxon>Rattus</taxon>
    </lineage>
</organism>
<reference key="1">
    <citation type="submission" date="2005-08" db="EMBL/GenBank/DDBJ databases">
        <authorList>
            <person name="Mural R.J."/>
            <person name="Adams M.D."/>
            <person name="Myers E.W."/>
            <person name="Smith H.O."/>
            <person name="Venter J.C."/>
        </authorList>
    </citation>
    <scope>NUCLEOTIDE SEQUENCE [LARGE SCALE GENOMIC DNA]</scope>
</reference>
<reference key="2">
    <citation type="journal article" date="2004" name="Genome Res.">
        <title>The status, quality, and expansion of the NIH full-length cDNA project: the Mammalian Gene Collection (MGC).</title>
        <authorList>
            <consortium name="The MGC Project Team"/>
        </authorList>
    </citation>
    <scope>NUCLEOTIDE SEQUENCE [LARGE SCALE MRNA] (ISOFORM 2)</scope>
    <source>
        <tissue>Ovary</tissue>
    </source>
</reference>
<reference key="3">
    <citation type="journal article" date="2009" name="Neurobiol. Aging">
        <title>Identification and characterization of an insulin receptor substrate 4-interacting protein in rat brain: implications for longevity.</title>
        <authorList>
            <person name="Chiba T."/>
            <person name="Inoue D."/>
            <person name="Mizuno A."/>
            <person name="Komatsu T."/>
            <person name="Fujita S."/>
            <person name="Kubota H."/>
            <person name="Luisa Tagliaro M."/>
            <person name="Park S."/>
            <person name="Trindade L.S."/>
            <person name="Hayashida T."/>
            <person name="Hayashi H."/>
            <person name="Yamaza H."/>
            <person name="Higami Y."/>
            <person name="Shimokawa I."/>
        </authorList>
    </citation>
    <scope>INTERACTION WITH IRS4</scope>
    <scope>INDUCTION</scope>
    <scope>TISSUE SPECIFICITY</scope>
</reference>
<keyword id="KW-0007">Acetylation</keyword>
<keyword id="KW-0025">Alternative splicing</keyword>
<keyword id="KW-0131">Cell cycle</keyword>
<keyword id="KW-0963">Cytoplasm</keyword>
<keyword id="KW-1185">Reference proteome</keyword>
<keyword id="KW-0677">Repeat</keyword>
<keyword id="KW-0819">tRNA processing</keyword>
<keyword id="KW-0853">WD repeat</keyword>
<name>WDR6_RAT</name>